<feature type="chain" id="PRO_1000013145" description="Acyl-[acyl-carrier-protein]--UDP-N-acetylglucosamine O-acyltransferase">
    <location>
        <begin position="1"/>
        <end position="262"/>
    </location>
</feature>
<name>LPXA_PARC0</name>
<proteinExistence type="inferred from homology"/>
<keyword id="KW-0012">Acyltransferase</keyword>
<keyword id="KW-0963">Cytoplasm</keyword>
<keyword id="KW-0441">Lipid A biosynthesis</keyword>
<keyword id="KW-0444">Lipid biosynthesis</keyword>
<keyword id="KW-0443">Lipid metabolism</keyword>
<keyword id="KW-0677">Repeat</keyword>
<keyword id="KW-0808">Transferase</keyword>
<dbReference type="EC" id="2.3.1.129" evidence="1"/>
<dbReference type="EMBL" id="CP000512">
    <property type="protein sequence ID" value="ABM32419.1"/>
    <property type="molecule type" value="Genomic_DNA"/>
</dbReference>
<dbReference type="RefSeq" id="WP_011794965.1">
    <property type="nucleotide sequence ID" value="NC_008752.1"/>
</dbReference>
<dbReference type="SMR" id="A1TN81"/>
<dbReference type="STRING" id="397945.Aave_1835"/>
<dbReference type="GeneID" id="79793156"/>
<dbReference type="KEGG" id="aav:Aave_1835"/>
<dbReference type="eggNOG" id="COG1043">
    <property type="taxonomic scope" value="Bacteria"/>
</dbReference>
<dbReference type="HOGENOM" id="CLU_061249_0_0_4"/>
<dbReference type="OrthoDB" id="9807278at2"/>
<dbReference type="UniPathway" id="UPA00359">
    <property type="reaction ID" value="UER00477"/>
</dbReference>
<dbReference type="Proteomes" id="UP000002596">
    <property type="component" value="Chromosome"/>
</dbReference>
<dbReference type="GO" id="GO:0005737">
    <property type="term" value="C:cytoplasm"/>
    <property type="evidence" value="ECO:0007669"/>
    <property type="project" value="UniProtKB-SubCell"/>
</dbReference>
<dbReference type="GO" id="GO:0016020">
    <property type="term" value="C:membrane"/>
    <property type="evidence" value="ECO:0007669"/>
    <property type="project" value="GOC"/>
</dbReference>
<dbReference type="GO" id="GO:0008780">
    <property type="term" value="F:acyl-[acyl-carrier-protein]-UDP-N-acetylglucosamine O-acyltransferase activity"/>
    <property type="evidence" value="ECO:0007669"/>
    <property type="project" value="UniProtKB-UniRule"/>
</dbReference>
<dbReference type="GO" id="GO:0009245">
    <property type="term" value="P:lipid A biosynthetic process"/>
    <property type="evidence" value="ECO:0007669"/>
    <property type="project" value="UniProtKB-UniRule"/>
</dbReference>
<dbReference type="CDD" id="cd03351">
    <property type="entry name" value="LbH_UDP-GlcNAc_AT"/>
    <property type="match status" value="1"/>
</dbReference>
<dbReference type="Gene3D" id="2.160.10.10">
    <property type="entry name" value="Hexapeptide repeat proteins"/>
    <property type="match status" value="1"/>
</dbReference>
<dbReference type="Gene3D" id="1.20.1180.10">
    <property type="entry name" value="Udp N-acetylglucosamine O-acyltransferase, C-terminal domain"/>
    <property type="match status" value="1"/>
</dbReference>
<dbReference type="HAMAP" id="MF_00387">
    <property type="entry name" value="LpxA"/>
    <property type="match status" value="1"/>
</dbReference>
<dbReference type="InterPro" id="IPR029098">
    <property type="entry name" value="Acetyltransf_C"/>
</dbReference>
<dbReference type="InterPro" id="IPR037157">
    <property type="entry name" value="Acetyltransf_C_sf"/>
</dbReference>
<dbReference type="InterPro" id="IPR001451">
    <property type="entry name" value="Hexapep"/>
</dbReference>
<dbReference type="InterPro" id="IPR018357">
    <property type="entry name" value="Hexapep_transf_CS"/>
</dbReference>
<dbReference type="InterPro" id="IPR010137">
    <property type="entry name" value="Lipid_A_LpxA"/>
</dbReference>
<dbReference type="InterPro" id="IPR011004">
    <property type="entry name" value="Trimer_LpxA-like_sf"/>
</dbReference>
<dbReference type="NCBIfam" id="TIGR01852">
    <property type="entry name" value="lipid_A_lpxA"/>
    <property type="match status" value="1"/>
</dbReference>
<dbReference type="NCBIfam" id="NF003657">
    <property type="entry name" value="PRK05289.1"/>
    <property type="match status" value="1"/>
</dbReference>
<dbReference type="PANTHER" id="PTHR43480">
    <property type="entry name" value="ACYL-[ACYL-CARRIER-PROTEIN]--UDP-N-ACETYLGLUCOSAMINE O-ACYLTRANSFERASE"/>
    <property type="match status" value="1"/>
</dbReference>
<dbReference type="PANTHER" id="PTHR43480:SF1">
    <property type="entry name" value="ACYL-[ACYL-CARRIER-PROTEIN]--UDP-N-ACETYLGLUCOSAMINE O-ACYLTRANSFERASE, MITOCHONDRIAL-RELATED"/>
    <property type="match status" value="1"/>
</dbReference>
<dbReference type="Pfam" id="PF13720">
    <property type="entry name" value="Acetyltransf_11"/>
    <property type="match status" value="1"/>
</dbReference>
<dbReference type="Pfam" id="PF00132">
    <property type="entry name" value="Hexapep"/>
    <property type="match status" value="1"/>
</dbReference>
<dbReference type="PIRSF" id="PIRSF000456">
    <property type="entry name" value="UDP-GlcNAc_acltr"/>
    <property type="match status" value="1"/>
</dbReference>
<dbReference type="SUPFAM" id="SSF51161">
    <property type="entry name" value="Trimeric LpxA-like enzymes"/>
    <property type="match status" value="1"/>
</dbReference>
<dbReference type="PROSITE" id="PS00101">
    <property type="entry name" value="HEXAPEP_TRANSFERASES"/>
    <property type="match status" value="1"/>
</dbReference>
<organism>
    <name type="scientific">Paracidovorax citrulli (strain AAC00-1)</name>
    <name type="common">Acidovorax citrulli</name>
    <dbReference type="NCBI Taxonomy" id="397945"/>
    <lineage>
        <taxon>Bacteria</taxon>
        <taxon>Pseudomonadati</taxon>
        <taxon>Pseudomonadota</taxon>
        <taxon>Betaproteobacteria</taxon>
        <taxon>Burkholderiales</taxon>
        <taxon>Comamonadaceae</taxon>
        <taxon>Paracidovorax</taxon>
    </lineage>
</organism>
<evidence type="ECO:0000255" key="1">
    <source>
        <dbReference type="HAMAP-Rule" id="MF_00387"/>
    </source>
</evidence>
<comment type="function">
    <text evidence="1">Involved in the biosynthesis of lipid A, a phosphorylated glycolipid that anchors the lipopolysaccharide to the outer membrane of the cell.</text>
</comment>
<comment type="catalytic activity">
    <reaction evidence="1">
        <text>a (3R)-hydroxyacyl-[ACP] + UDP-N-acetyl-alpha-D-glucosamine = a UDP-3-O-[(3R)-3-hydroxyacyl]-N-acetyl-alpha-D-glucosamine + holo-[ACP]</text>
        <dbReference type="Rhea" id="RHEA:67812"/>
        <dbReference type="Rhea" id="RHEA-COMP:9685"/>
        <dbReference type="Rhea" id="RHEA-COMP:9945"/>
        <dbReference type="ChEBI" id="CHEBI:57705"/>
        <dbReference type="ChEBI" id="CHEBI:64479"/>
        <dbReference type="ChEBI" id="CHEBI:78827"/>
        <dbReference type="ChEBI" id="CHEBI:173225"/>
        <dbReference type="EC" id="2.3.1.129"/>
    </reaction>
</comment>
<comment type="pathway">
    <text evidence="1">Glycolipid biosynthesis; lipid IV(A) biosynthesis; lipid IV(A) from (3R)-3-hydroxytetradecanoyl-[acyl-carrier-protein] and UDP-N-acetyl-alpha-D-glucosamine: step 1/6.</text>
</comment>
<comment type="subunit">
    <text evidence="1">Homotrimer.</text>
</comment>
<comment type="subcellular location">
    <subcellularLocation>
        <location evidence="1">Cytoplasm</location>
    </subcellularLocation>
</comment>
<comment type="similarity">
    <text evidence="1">Belongs to the transferase hexapeptide repeat family. LpxA subfamily.</text>
</comment>
<protein>
    <recommendedName>
        <fullName evidence="1">Acyl-[acyl-carrier-protein]--UDP-N-acetylglucosamine O-acyltransferase</fullName>
        <shortName evidence="1">UDP-N-acetylglucosamine acyltransferase</shortName>
        <ecNumber evidence="1">2.3.1.129</ecNumber>
    </recommendedName>
</protein>
<sequence length="262" mass="27774">MSSIHSTAIVDPGAELDSSVTVGPYAVIGPKVRIGAGTSVGPHCVIEGRTTIGRDNRIFQFASLGAIPQDKKYAGEDTCLEIGDRNTIREFCTFNLGVPGAGGVTRVGDDNWIMAYCHIAHDCLVGNHTTLSNNTTLAGHVELGDWVTVGGLVGIHQFVKIGAHAMVGFASAVSQDVPPFMLVDGNPMGVRGFNIVGLKRRGFSADRLAAVKQMHRLLYRQGLTLEAAAKAIEELAAEHPEAAGDITLLRDFIVSSTRGIAR</sequence>
<accession>A1TN81</accession>
<gene>
    <name evidence="1" type="primary">lpxA</name>
    <name type="ordered locus">Aave_1835</name>
</gene>
<reference key="1">
    <citation type="submission" date="2006-12" db="EMBL/GenBank/DDBJ databases">
        <title>Complete sequence of Acidovorax avenae subsp. citrulli AAC00-1.</title>
        <authorList>
            <person name="Copeland A."/>
            <person name="Lucas S."/>
            <person name="Lapidus A."/>
            <person name="Barry K."/>
            <person name="Detter J.C."/>
            <person name="Glavina del Rio T."/>
            <person name="Dalin E."/>
            <person name="Tice H."/>
            <person name="Pitluck S."/>
            <person name="Kiss H."/>
            <person name="Brettin T."/>
            <person name="Bruce D."/>
            <person name="Han C."/>
            <person name="Tapia R."/>
            <person name="Gilna P."/>
            <person name="Schmutz J."/>
            <person name="Larimer F."/>
            <person name="Land M."/>
            <person name="Hauser L."/>
            <person name="Kyrpides N."/>
            <person name="Kim E."/>
            <person name="Stahl D."/>
            <person name="Richardson P."/>
        </authorList>
    </citation>
    <scope>NUCLEOTIDE SEQUENCE [LARGE SCALE GENOMIC DNA]</scope>
    <source>
        <strain>AAC00-1</strain>
    </source>
</reference>